<dbReference type="EMBL" id="AE008691">
    <property type="protein sequence ID" value="AAM25884.1"/>
    <property type="molecule type" value="Genomic_DNA"/>
</dbReference>
<dbReference type="RefSeq" id="WP_011026749.1">
    <property type="nucleotide sequence ID" value="NC_003869.1"/>
</dbReference>
<dbReference type="SMR" id="Q8R6M2"/>
<dbReference type="STRING" id="273068.TTE2780"/>
<dbReference type="KEGG" id="tte:TTE2780"/>
<dbReference type="eggNOG" id="COG0629">
    <property type="taxonomic scope" value="Bacteria"/>
</dbReference>
<dbReference type="HOGENOM" id="CLU_078758_6_2_9"/>
<dbReference type="OrthoDB" id="9809878at2"/>
<dbReference type="Proteomes" id="UP000000555">
    <property type="component" value="Chromosome"/>
</dbReference>
<dbReference type="GO" id="GO:0009295">
    <property type="term" value="C:nucleoid"/>
    <property type="evidence" value="ECO:0007669"/>
    <property type="project" value="TreeGrafter"/>
</dbReference>
<dbReference type="GO" id="GO:0003697">
    <property type="term" value="F:single-stranded DNA binding"/>
    <property type="evidence" value="ECO:0007669"/>
    <property type="project" value="UniProtKB-UniRule"/>
</dbReference>
<dbReference type="GO" id="GO:0006310">
    <property type="term" value="P:DNA recombination"/>
    <property type="evidence" value="ECO:0007669"/>
    <property type="project" value="UniProtKB-UniRule"/>
</dbReference>
<dbReference type="GO" id="GO:0006281">
    <property type="term" value="P:DNA repair"/>
    <property type="evidence" value="ECO:0007669"/>
    <property type="project" value="UniProtKB-UniRule"/>
</dbReference>
<dbReference type="GO" id="GO:0006260">
    <property type="term" value="P:DNA replication"/>
    <property type="evidence" value="ECO:0007669"/>
    <property type="project" value="UniProtKB-UniRule"/>
</dbReference>
<dbReference type="CDD" id="cd04496">
    <property type="entry name" value="SSB_OBF"/>
    <property type="match status" value="1"/>
</dbReference>
<dbReference type="Gene3D" id="2.40.50.140">
    <property type="entry name" value="Nucleic acid-binding proteins"/>
    <property type="match status" value="1"/>
</dbReference>
<dbReference type="HAMAP" id="MF_00984">
    <property type="entry name" value="SSB"/>
    <property type="match status" value="1"/>
</dbReference>
<dbReference type="InterPro" id="IPR012340">
    <property type="entry name" value="NA-bd_OB-fold"/>
</dbReference>
<dbReference type="InterPro" id="IPR000424">
    <property type="entry name" value="Primosome_PriB/ssb"/>
</dbReference>
<dbReference type="InterPro" id="IPR011344">
    <property type="entry name" value="ssDNA-bd"/>
</dbReference>
<dbReference type="NCBIfam" id="TIGR00621">
    <property type="entry name" value="ssb"/>
    <property type="match status" value="1"/>
</dbReference>
<dbReference type="PANTHER" id="PTHR10302">
    <property type="entry name" value="SINGLE-STRANDED DNA-BINDING PROTEIN"/>
    <property type="match status" value="1"/>
</dbReference>
<dbReference type="PANTHER" id="PTHR10302:SF27">
    <property type="entry name" value="SINGLE-STRANDED DNA-BINDING PROTEIN"/>
    <property type="match status" value="1"/>
</dbReference>
<dbReference type="Pfam" id="PF00436">
    <property type="entry name" value="SSB"/>
    <property type="match status" value="1"/>
</dbReference>
<dbReference type="SUPFAM" id="SSF50249">
    <property type="entry name" value="Nucleic acid-binding proteins"/>
    <property type="match status" value="1"/>
</dbReference>
<dbReference type="PROSITE" id="PS50935">
    <property type="entry name" value="SSB"/>
    <property type="match status" value="1"/>
</dbReference>
<gene>
    <name type="primary">ssb</name>
    <name type="ordered locus">TTE2780</name>
</gene>
<name>SSB_CALS4</name>
<accession>Q8R6M2</accession>
<evidence type="ECO:0000255" key="1">
    <source>
        <dbReference type="HAMAP-Rule" id="MF_00984"/>
    </source>
</evidence>
<evidence type="ECO:0000256" key="2">
    <source>
        <dbReference type="SAM" id="MobiDB-lite"/>
    </source>
</evidence>
<organism>
    <name type="scientific">Caldanaerobacter subterraneus subsp. tengcongensis (strain DSM 15242 / JCM 11007 / NBRC 100824 / MB4)</name>
    <name type="common">Thermoanaerobacter tengcongensis</name>
    <dbReference type="NCBI Taxonomy" id="273068"/>
    <lineage>
        <taxon>Bacteria</taxon>
        <taxon>Bacillati</taxon>
        <taxon>Bacillota</taxon>
        <taxon>Clostridia</taxon>
        <taxon>Thermoanaerobacterales</taxon>
        <taxon>Thermoanaerobacteraceae</taxon>
        <taxon>Caldanaerobacter</taxon>
    </lineage>
</organism>
<comment type="function">
    <text evidence="1">Plays an important role in DNA replication, recombination and repair. Binds to ssDNA and to an array of partner proteins to recruit them to their sites of action during DNA metabolism.</text>
</comment>
<comment type="subunit">
    <text evidence="1">Homotetramer.</text>
</comment>
<protein>
    <recommendedName>
        <fullName evidence="1">Single-stranded DNA-binding protein</fullName>
        <shortName evidence="1">SSB</shortName>
    </recommendedName>
</protein>
<keyword id="KW-0227">DNA damage</keyword>
<keyword id="KW-0233">DNA recombination</keyword>
<keyword id="KW-0234">DNA repair</keyword>
<keyword id="KW-0235">DNA replication</keyword>
<keyword id="KW-0238">DNA-binding</keyword>
<keyword id="KW-1185">Reference proteome</keyword>
<proteinExistence type="inferred from homology"/>
<feature type="chain" id="PRO_0000096129" description="Single-stranded DNA-binding protein">
    <location>
        <begin position="1"/>
        <end position="150"/>
    </location>
</feature>
<feature type="domain" description="SSB" evidence="1">
    <location>
        <begin position="1"/>
        <end position="104"/>
    </location>
</feature>
<feature type="region of interest" description="Disordered" evidence="2">
    <location>
        <begin position="105"/>
        <end position="124"/>
    </location>
</feature>
<feature type="short sequence motif" description="Important for interaction with partner proteins" evidence="1">
    <location>
        <begin position="145"/>
        <end position="150"/>
    </location>
</feature>
<feature type="compositionally biased region" description="Acidic residues" evidence="2">
    <location>
        <begin position="115"/>
        <end position="124"/>
    </location>
</feature>
<sequence>MLNKVILIGRLTKDPVMRYTSDMVPVTTFTLAVNRNYVSQSGERPTDFIPIVTWRKLAEICANNLKKGRLVAVTGSIQTRTWDDSSGNRHWVTEVVADDVRFLEPKSGFGSGSAPEEEKELDEDFDKLFEDIPDDFDGFTPIESEDDLPF</sequence>
<reference key="1">
    <citation type="journal article" date="2002" name="Genome Res.">
        <title>A complete sequence of the T. tengcongensis genome.</title>
        <authorList>
            <person name="Bao Q."/>
            <person name="Tian Y."/>
            <person name="Li W."/>
            <person name="Xu Z."/>
            <person name="Xuan Z."/>
            <person name="Hu S."/>
            <person name="Dong W."/>
            <person name="Yang J."/>
            <person name="Chen Y."/>
            <person name="Xue Y."/>
            <person name="Xu Y."/>
            <person name="Lai X."/>
            <person name="Huang L."/>
            <person name="Dong X."/>
            <person name="Ma Y."/>
            <person name="Ling L."/>
            <person name="Tan H."/>
            <person name="Chen R."/>
            <person name="Wang J."/>
            <person name="Yu J."/>
            <person name="Yang H."/>
        </authorList>
    </citation>
    <scope>NUCLEOTIDE SEQUENCE [LARGE SCALE GENOMIC DNA]</scope>
    <source>
        <strain>DSM 15242 / JCM 11007 / NBRC 100824 / MB4</strain>
    </source>
</reference>